<name>UBIA_VIBCM</name>
<feature type="chain" id="PRO_1000186694" description="4-hydroxybenzoate octaprenyltransferase">
    <location>
        <begin position="1"/>
        <end position="284"/>
    </location>
</feature>
<feature type="transmembrane region" description="Helical" evidence="1">
    <location>
        <begin position="19"/>
        <end position="39"/>
    </location>
</feature>
<feature type="transmembrane region" description="Helical" evidence="1">
    <location>
        <begin position="42"/>
        <end position="62"/>
    </location>
</feature>
<feature type="transmembrane region" description="Helical" evidence="1">
    <location>
        <begin position="93"/>
        <end position="113"/>
    </location>
</feature>
<feature type="transmembrane region" description="Helical" evidence="1">
    <location>
        <begin position="114"/>
        <end position="134"/>
    </location>
</feature>
<feature type="transmembrane region" description="Helical" evidence="1">
    <location>
        <begin position="136"/>
        <end position="156"/>
    </location>
</feature>
<feature type="transmembrane region" description="Helical" evidence="1">
    <location>
        <begin position="158"/>
        <end position="178"/>
    </location>
</feature>
<feature type="transmembrane region" description="Helical" evidence="1">
    <location>
        <begin position="210"/>
        <end position="230"/>
    </location>
</feature>
<feature type="transmembrane region" description="Helical" evidence="1">
    <location>
        <begin position="233"/>
        <end position="253"/>
    </location>
</feature>
<feature type="transmembrane region" description="Helical" evidence="1">
    <location>
        <begin position="264"/>
        <end position="284"/>
    </location>
</feature>
<dbReference type="EC" id="2.5.1.39" evidence="1"/>
<dbReference type="EMBL" id="CP001233">
    <property type="protein sequence ID" value="ACP04430.1"/>
    <property type="molecule type" value="Genomic_DNA"/>
</dbReference>
<dbReference type="RefSeq" id="WP_000127681.1">
    <property type="nucleotide sequence ID" value="NC_012578.1"/>
</dbReference>
<dbReference type="SMR" id="C3LPT6"/>
<dbReference type="KEGG" id="vcm:VCM66_0094"/>
<dbReference type="HOGENOM" id="CLU_034879_1_0_6"/>
<dbReference type="UniPathway" id="UPA00232"/>
<dbReference type="Proteomes" id="UP000001217">
    <property type="component" value="Chromosome I"/>
</dbReference>
<dbReference type="GO" id="GO:0005886">
    <property type="term" value="C:plasma membrane"/>
    <property type="evidence" value="ECO:0007669"/>
    <property type="project" value="UniProtKB-SubCell"/>
</dbReference>
<dbReference type="GO" id="GO:0008412">
    <property type="term" value="F:4-hydroxybenzoate polyprenyltransferase activity"/>
    <property type="evidence" value="ECO:0007669"/>
    <property type="project" value="UniProtKB-UniRule"/>
</dbReference>
<dbReference type="GO" id="GO:0006744">
    <property type="term" value="P:ubiquinone biosynthetic process"/>
    <property type="evidence" value="ECO:0007669"/>
    <property type="project" value="UniProtKB-UniRule"/>
</dbReference>
<dbReference type="CDD" id="cd13959">
    <property type="entry name" value="PT_UbiA_COQ2"/>
    <property type="match status" value="1"/>
</dbReference>
<dbReference type="FunFam" id="1.10.357.140:FF:000002">
    <property type="entry name" value="4-hydroxybenzoate octaprenyltransferase"/>
    <property type="match status" value="1"/>
</dbReference>
<dbReference type="FunFam" id="1.20.120.1780:FF:000001">
    <property type="entry name" value="4-hydroxybenzoate octaprenyltransferase"/>
    <property type="match status" value="1"/>
</dbReference>
<dbReference type="Gene3D" id="1.10.357.140">
    <property type="entry name" value="UbiA prenyltransferase"/>
    <property type="match status" value="1"/>
</dbReference>
<dbReference type="Gene3D" id="1.20.120.1780">
    <property type="entry name" value="UbiA prenyltransferase"/>
    <property type="match status" value="1"/>
</dbReference>
<dbReference type="HAMAP" id="MF_01635">
    <property type="entry name" value="UbiA"/>
    <property type="match status" value="1"/>
</dbReference>
<dbReference type="InterPro" id="IPR006370">
    <property type="entry name" value="HB_polyprenyltransferase-like"/>
</dbReference>
<dbReference type="InterPro" id="IPR039653">
    <property type="entry name" value="Prenyltransferase"/>
</dbReference>
<dbReference type="InterPro" id="IPR000537">
    <property type="entry name" value="UbiA_prenyltransferase"/>
</dbReference>
<dbReference type="InterPro" id="IPR044878">
    <property type="entry name" value="UbiA_sf"/>
</dbReference>
<dbReference type="NCBIfam" id="TIGR01474">
    <property type="entry name" value="ubiA_proteo"/>
    <property type="match status" value="1"/>
</dbReference>
<dbReference type="PANTHER" id="PTHR11048:SF28">
    <property type="entry name" value="4-HYDROXYBENZOATE POLYPRENYLTRANSFERASE, MITOCHONDRIAL"/>
    <property type="match status" value="1"/>
</dbReference>
<dbReference type="PANTHER" id="PTHR11048">
    <property type="entry name" value="PRENYLTRANSFERASES"/>
    <property type="match status" value="1"/>
</dbReference>
<dbReference type="Pfam" id="PF01040">
    <property type="entry name" value="UbiA"/>
    <property type="match status" value="1"/>
</dbReference>
<protein>
    <recommendedName>
        <fullName evidence="1">4-hydroxybenzoate octaprenyltransferase</fullName>
        <ecNumber evidence="1">2.5.1.39</ecNumber>
    </recommendedName>
    <alternativeName>
        <fullName evidence="1">4-HB polyprenyltransferase</fullName>
    </alternativeName>
</protein>
<reference key="1">
    <citation type="journal article" date="2008" name="PLoS ONE">
        <title>A recalibrated molecular clock and independent origins for the cholera pandemic clones.</title>
        <authorList>
            <person name="Feng L."/>
            <person name="Reeves P.R."/>
            <person name="Lan R."/>
            <person name="Ren Y."/>
            <person name="Gao C."/>
            <person name="Zhou Z."/>
            <person name="Ren Y."/>
            <person name="Cheng J."/>
            <person name="Wang W."/>
            <person name="Wang J."/>
            <person name="Qian W."/>
            <person name="Li D."/>
            <person name="Wang L."/>
        </authorList>
    </citation>
    <scope>NUCLEOTIDE SEQUENCE [LARGE SCALE GENOMIC DNA]</scope>
    <source>
        <strain>M66-2</strain>
    </source>
</reference>
<evidence type="ECO:0000255" key="1">
    <source>
        <dbReference type="HAMAP-Rule" id="MF_01635"/>
    </source>
</evidence>
<gene>
    <name evidence="1" type="primary">ubiA</name>
    <name type="ordered locus">VCM66_0094</name>
</gene>
<organism>
    <name type="scientific">Vibrio cholerae serotype O1 (strain M66-2)</name>
    <dbReference type="NCBI Taxonomy" id="579112"/>
    <lineage>
        <taxon>Bacteria</taxon>
        <taxon>Pseudomonadati</taxon>
        <taxon>Pseudomonadota</taxon>
        <taxon>Gammaproteobacteria</taxon>
        <taxon>Vibrionales</taxon>
        <taxon>Vibrionaceae</taxon>
        <taxon>Vibrio</taxon>
    </lineage>
</organism>
<proteinExistence type="inferred from homology"/>
<sequence length="284" mass="31820">MTAVKARAYWQLMRMDRPIGSLLLLWPTLWALLLAAQGLPDLRVLVVFVLGVFLMRSAGCVINDYADRHVDGHVKRTSQRPLPAGLVSAKEALLLFVLLAVSSFLLVLTMNTLTIQLSFIGILLAFVYPFMKRFTHLPQLVLGLAFSWSIPMAWAAQANTLTPQVWVLFLINALWTIAYDTQYAMVDRDDDVKIGIKSTAILFGRWDKRIIGLLQLATLSLLVALGQGLALGTSYYWGLLIAAGLFAYQQHLIRYRERMPCFQAFLNNNYVGMAITAGILLSVW</sequence>
<accession>C3LPT6</accession>
<comment type="function">
    <text evidence="1">Catalyzes the prenylation of para-hydroxybenzoate (PHB) with an all-trans polyprenyl group. Mediates the second step in the final reaction sequence of ubiquinone-8 (UQ-8) biosynthesis, which is the condensation of the polyisoprenoid side chain with PHB, generating the first membrane-bound Q intermediate 3-octaprenyl-4-hydroxybenzoate.</text>
</comment>
<comment type="catalytic activity">
    <reaction evidence="1">
        <text>all-trans-octaprenyl diphosphate + 4-hydroxybenzoate = 4-hydroxy-3-(all-trans-octaprenyl)benzoate + diphosphate</text>
        <dbReference type="Rhea" id="RHEA:27782"/>
        <dbReference type="ChEBI" id="CHEBI:1617"/>
        <dbReference type="ChEBI" id="CHEBI:17879"/>
        <dbReference type="ChEBI" id="CHEBI:33019"/>
        <dbReference type="ChEBI" id="CHEBI:57711"/>
        <dbReference type="EC" id="2.5.1.39"/>
    </reaction>
</comment>
<comment type="cofactor">
    <cofactor evidence="1">
        <name>Mg(2+)</name>
        <dbReference type="ChEBI" id="CHEBI:18420"/>
    </cofactor>
</comment>
<comment type="pathway">
    <text evidence="1">Cofactor biosynthesis; ubiquinone biosynthesis.</text>
</comment>
<comment type="subcellular location">
    <subcellularLocation>
        <location evidence="1">Cell inner membrane</location>
        <topology evidence="1">Multi-pass membrane protein</topology>
    </subcellularLocation>
</comment>
<comment type="similarity">
    <text evidence="1">Belongs to the UbiA prenyltransferase family.</text>
</comment>
<keyword id="KW-0997">Cell inner membrane</keyword>
<keyword id="KW-1003">Cell membrane</keyword>
<keyword id="KW-0460">Magnesium</keyword>
<keyword id="KW-0472">Membrane</keyword>
<keyword id="KW-0808">Transferase</keyword>
<keyword id="KW-0812">Transmembrane</keyword>
<keyword id="KW-1133">Transmembrane helix</keyword>
<keyword id="KW-0831">Ubiquinone biosynthesis</keyword>